<organism>
    <name type="scientific">Histophilus somni (strain 2336)</name>
    <name type="common">Haemophilus somnus</name>
    <dbReference type="NCBI Taxonomy" id="228400"/>
    <lineage>
        <taxon>Bacteria</taxon>
        <taxon>Pseudomonadati</taxon>
        <taxon>Pseudomonadota</taxon>
        <taxon>Gammaproteobacteria</taxon>
        <taxon>Pasteurellales</taxon>
        <taxon>Pasteurellaceae</taxon>
        <taxon>Histophilus</taxon>
    </lineage>
</organism>
<feature type="chain" id="PRO_1000077990" description="3-phosphoshikimate 1-carboxyvinyltransferase">
    <location>
        <begin position="1"/>
        <end position="432"/>
    </location>
</feature>
<feature type="active site" description="Proton acceptor" evidence="1">
    <location>
        <position position="316"/>
    </location>
</feature>
<feature type="binding site" evidence="1">
    <location>
        <position position="22"/>
    </location>
    <ligand>
        <name>3-phosphoshikimate</name>
        <dbReference type="ChEBI" id="CHEBI:145989"/>
    </ligand>
</feature>
<feature type="binding site" evidence="1">
    <location>
        <position position="22"/>
    </location>
    <ligand>
        <name>phosphoenolpyruvate</name>
        <dbReference type="ChEBI" id="CHEBI:58702"/>
    </ligand>
</feature>
<feature type="binding site" evidence="1">
    <location>
        <position position="23"/>
    </location>
    <ligand>
        <name>3-phosphoshikimate</name>
        <dbReference type="ChEBI" id="CHEBI:145989"/>
    </ligand>
</feature>
<feature type="binding site" evidence="1">
    <location>
        <position position="27"/>
    </location>
    <ligand>
        <name>3-phosphoshikimate</name>
        <dbReference type="ChEBI" id="CHEBI:145989"/>
    </ligand>
</feature>
<feature type="binding site" evidence="1">
    <location>
        <position position="96"/>
    </location>
    <ligand>
        <name>phosphoenolpyruvate</name>
        <dbReference type="ChEBI" id="CHEBI:58702"/>
    </ligand>
</feature>
<feature type="binding site" evidence="1">
    <location>
        <position position="127"/>
    </location>
    <ligand>
        <name>phosphoenolpyruvate</name>
        <dbReference type="ChEBI" id="CHEBI:58702"/>
    </ligand>
</feature>
<feature type="binding site" evidence="1">
    <location>
        <position position="173"/>
    </location>
    <ligand>
        <name>3-phosphoshikimate</name>
        <dbReference type="ChEBI" id="CHEBI:145989"/>
    </ligand>
</feature>
<feature type="binding site" evidence="1">
    <location>
        <position position="174"/>
    </location>
    <ligand>
        <name>3-phosphoshikimate</name>
        <dbReference type="ChEBI" id="CHEBI:145989"/>
    </ligand>
</feature>
<feature type="binding site" evidence="1">
    <location>
        <position position="175"/>
    </location>
    <ligand>
        <name>3-phosphoshikimate</name>
        <dbReference type="ChEBI" id="CHEBI:145989"/>
    </ligand>
</feature>
<feature type="binding site" evidence="1">
    <location>
        <position position="175"/>
    </location>
    <ligand>
        <name>phosphoenolpyruvate</name>
        <dbReference type="ChEBI" id="CHEBI:58702"/>
    </ligand>
</feature>
<feature type="binding site" evidence="1">
    <location>
        <position position="201"/>
    </location>
    <ligand>
        <name>3-phosphoshikimate</name>
        <dbReference type="ChEBI" id="CHEBI:145989"/>
    </ligand>
</feature>
<feature type="binding site" evidence="1">
    <location>
        <position position="316"/>
    </location>
    <ligand>
        <name>3-phosphoshikimate</name>
        <dbReference type="ChEBI" id="CHEBI:145989"/>
    </ligand>
</feature>
<feature type="binding site" evidence="1">
    <location>
        <position position="339"/>
    </location>
    <ligand>
        <name>3-phosphoshikimate</name>
        <dbReference type="ChEBI" id="CHEBI:145989"/>
    </ligand>
</feature>
<feature type="binding site" evidence="1">
    <location>
        <position position="343"/>
    </location>
    <ligand>
        <name>3-phosphoshikimate</name>
        <dbReference type="ChEBI" id="CHEBI:145989"/>
    </ligand>
</feature>
<feature type="binding site" evidence="1">
    <location>
        <position position="347"/>
    </location>
    <ligand>
        <name>phosphoenolpyruvate</name>
        <dbReference type="ChEBI" id="CHEBI:58702"/>
    </ligand>
</feature>
<feature type="binding site" evidence="1">
    <location>
        <position position="391"/>
    </location>
    <ligand>
        <name>phosphoenolpyruvate</name>
        <dbReference type="ChEBI" id="CHEBI:58702"/>
    </ligand>
</feature>
<feature type="binding site" evidence="1">
    <location>
        <position position="416"/>
    </location>
    <ligand>
        <name>phosphoenolpyruvate</name>
        <dbReference type="ChEBI" id="CHEBI:58702"/>
    </ligand>
</feature>
<keyword id="KW-0028">Amino-acid biosynthesis</keyword>
<keyword id="KW-0057">Aromatic amino acid biosynthesis</keyword>
<keyword id="KW-0963">Cytoplasm</keyword>
<keyword id="KW-0808">Transferase</keyword>
<protein>
    <recommendedName>
        <fullName evidence="1">3-phosphoshikimate 1-carboxyvinyltransferase</fullName>
        <ecNumber evidence="1">2.5.1.19</ecNumber>
    </recommendedName>
    <alternativeName>
        <fullName evidence="1">5-enolpyruvylshikimate-3-phosphate synthase</fullName>
        <shortName evidence="1">EPSP synthase</shortName>
        <shortName evidence="1">EPSPS</shortName>
    </alternativeName>
</protein>
<proteinExistence type="inferred from homology"/>
<comment type="function">
    <text evidence="1">Catalyzes the transfer of the enolpyruvyl moiety of phosphoenolpyruvate (PEP) to the 5-hydroxyl of shikimate-3-phosphate (S3P) to produce enolpyruvyl shikimate-3-phosphate and inorganic phosphate.</text>
</comment>
<comment type="catalytic activity">
    <reaction evidence="1">
        <text>3-phosphoshikimate + phosphoenolpyruvate = 5-O-(1-carboxyvinyl)-3-phosphoshikimate + phosphate</text>
        <dbReference type="Rhea" id="RHEA:21256"/>
        <dbReference type="ChEBI" id="CHEBI:43474"/>
        <dbReference type="ChEBI" id="CHEBI:57701"/>
        <dbReference type="ChEBI" id="CHEBI:58702"/>
        <dbReference type="ChEBI" id="CHEBI:145989"/>
        <dbReference type="EC" id="2.5.1.19"/>
    </reaction>
    <physiologicalReaction direction="left-to-right" evidence="1">
        <dbReference type="Rhea" id="RHEA:21257"/>
    </physiologicalReaction>
</comment>
<comment type="pathway">
    <text evidence="1">Metabolic intermediate biosynthesis; chorismate biosynthesis; chorismate from D-erythrose 4-phosphate and phosphoenolpyruvate: step 6/7.</text>
</comment>
<comment type="subunit">
    <text evidence="1">Monomer.</text>
</comment>
<comment type="subcellular location">
    <subcellularLocation>
        <location evidence="1">Cytoplasm</location>
    </subcellularLocation>
</comment>
<comment type="similarity">
    <text evidence="1">Belongs to the EPSP synthase family.</text>
</comment>
<dbReference type="EC" id="2.5.1.19" evidence="1"/>
<dbReference type="EMBL" id="CP000947">
    <property type="protein sequence ID" value="ACA32650.1"/>
    <property type="molecule type" value="Genomic_DNA"/>
</dbReference>
<dbReference type="RefSeq" id="WP_012341768.1">
    <property type="nucleotide sequence ID" value="NC_010519.1"/>
</dbReference>
<dbReference type="SMR" id="B0UT47"/>
<dbReference type="STRING" id="228400.HSM_0964"/>
<dbReference type="GeneID" id="31487265"/>
<dbReference type="KEGG" id="hsm:HSM_0964"/>
<dbReference type="HOGENOM" id="CLU_024321_0_0_6"/>
<dbReference type="UniPathway" id="UPA00053">
    <property type="reaction ID" value="UER00089"/>
</dbReference>
<dbReference type="GO" id="GO:0005737">
    <property type="term" value="C:cytoplasm"/>
    <property type="evidence" value="ECO:0007669"/>
    <property type="project" value="UniProtKB-SubCell"/>
</dbReference>
<dbReference type="GO" id="GO:0003866">
    <property type="term" value="F:3-phosphoshikimate 1-carboxyvinyltransferase activity"/>
    <property type="evidence" value="ECO:0007669"/>
    <property type="project" value="UniProtKB-UniRule"/>
</dbReference>
<dbReference type="GO" id="GO:0008652">
    <property type="term" value="P:amino acid biosynthetic process"/>
    <property type="evidence" value="ECO:0007669"/>
    <property type="project" value="UniProtKB-KW"/>
</dbReference>
<dbReference type="GO" id="GO:0009073">
    <property type="term" value="P:aromatic amino acid family biosynthetic process"/>
    <property type="evidence" value="ECO:0007669"/>
    <property type="project" value="UniProtKB-KW"/>
</dbReference>
<dbReference type="GO" id="GO:0009423">
    <property type="term" value="P:chorismate biosynthetic process"/>
    <property type="evidence" value="ECO:0007669"/>
    <property type="project" value="UniProtKB-UniRule"/>
</dbReference>
<dbReference type="CDD" id="cd01556">
    <property type="entry name" value="EPSP_synthase"/>
    <property type="match status" value="1"/>
</dbReference>
<dbReference type="FunFam" id="3.65.10.10:FF:000003">
    <property type="entry name" value="3-phosphoshikimate 1-carboxyvinyltransferase"/>
    <property type="match status" value="1"/>
</dbReference>
<dbReference type="FunFam" id="3.65.10.10:FF:000004">
    <property type="entry name" value="3-phosphoshikimate 1-carboxyvinyltransferase"/>
    <property type="match status" value="1"/>
</dbReference>
<dbReference type="Gene3D" id="3.65.10.10">
    <property type="entry name" value="Enolpyruvate transferase domain"/>
    <property type="match status" value="2"/>
</dbReference>
<dbReference type="HAMAP" id="MF_00210">
    <property type="entry name" value="EPSP_synth"/>
    <property type="match status" value="1"/>
</dbReference>
<dbReference type="InterPro" id="IPR001986">
    <property type="entry name" value="Enolpyruvate_Tfrase_dom"/>
</dbReference>
<dbReference type="InterPro" id="IPR036968">
    <property type="entry name" value="Enolpyruvate_Tfrase_sf"/>
</dbReference>
<dbReference type="InterPro" id="IPR006264">
    <property type="entry name" value="EPSP_synthase"/>
</dbReference>
<dbReference type="InterPro" id="IPR023193">
    <property type="entry name" value="EPSP_synthase_CS"/>
</dbReference>
<dbReference type="InterPro" id="IPR013792">
    <property type="entry name" value="RNA3'P_cycl/enolpyr_Trfase_a/b"/>
</dbReference>
<dbReference type="NCBIfam" id="TIGR01356">
    <property type="entry name" value="aroA"/>
    <property type="match status" value="1"/>
</dbReference>
<dbReference type="PANTHER" id="PTHR21090">
    <property type="entry name" value="AROM/DEHYDROQUINATE SYNTHASE"/>
    <property type="match status" value="1"/>
</dbReference>
<dbReference type="PANTHER" id="PTHR21090:SF5">
    <property type="entry name" value="PENTAFUNCTIONAL AROM POLYPEPTIDE"/>
    <property type="match status" value="1"/>
</dbReference>
<dbReference type="Pfam" id="PF00275">
    <property type="entry name" value="EPSP_synthase"/>
    <property type="match status" value="1"/>
</dbReference>
<dbReference type="PIRSF" id="PIRSF000505">
    <property type="entry name" value="EPSPS"/>
    <property type="match status" value="1"/>
</dbReference>
<dbReference type="SUPFAM" id="SSF55205">
    <property type="entry name" value="EPT/RTPC-like"/>
    <property type="match status" value="1"/>
</dbReference>
<dbReference type="PROSITE" id="PS00104">
    <property type="entry name" value="EPSP_SYNTHASE_1"/>
    <property type="match status" value="1"/>
</dbReference>
<dbReference type="PROSITE" id="PS00885">
    <property type="entry name" value="EPSP_SYNTHASE_2"/>
    <property type="match status" value="1"/>
</dbReference>
<name>AROA_HISS2</name>
<gene>
    <name evidence="1" type="primary">aroA</name>
    <name type="ordered locus">HSM_0964</name>
</gene>
<sequence>MEKLTLSPISRIDGEINLPGSKSLSNRALLLAALAKGTTQVTNLLDSDDIRYMLNALKALGVNYQLSDDKTVCVVEGIGGAFQWQNGLSLFLGNAGTAMRPLAAALCLKGDTESEVILTGEPRMKERPIKHLVDALRQTGANIQYLENDGYPPLAIRNQGIFGGKVQIDGSISSQFLTALLMAAPLGEGDMEIEILGELVSKPYIDITLAMMKDFGINVEHYNYQRFLIKGKQYYISPQTYLVEGDASSASYFLAAAAIKGKVKVTGIGRNSIQGDRLFADVLAQMGAKVTWGEDFIQVEKSELKGIDMDMNHIPDAAMTIAITALFAQGETVIRNIYNWRVKETDRLTAIATELRKLGAEVEEGEDFIRIQPLALDKFKHAEIATYNDHRIAMCFSLIALSDTSVTILDPACTAKTFPTYFSEFEKISKNQ</sequence>
<accession>B0UT47</accession>
<evidence type="ECO:0000255" key="1">
    <source>
        <dbReference type="HAMAP-Rule" id="MF_00210"/>
    </source>
</evidence>
<reference key="1">
    <citation type="submission" date="2008-02" db="EMBL/GenBank/DDBJ databases">
        <title>Complete sequence of Haemophilus somnus 2336.</title>
        <authorList>
            <consortium name="US DOE Joint Genome Institute"/>
            <person name="Siddaramappa S."/>
            <person name="Duncan A.J."/>
            <person name="Challacombe J.F."/>
            <person name="Rainey D."/>
            <person name="Gillaspy A.F."/>
            <person name="Carson M."/>
            <person name="Gipson J."/>
            <person name="Gipson M."/>
            <person name="Bruce D."/>
            <person name="Detter J.C."/>
            <person name="Han C.S."/>
            <person name="Land M."/>
            <person name="Tapia R."/>
            <person name="Thompson L.S."/>
            <person name="Orvis J."/>
            <person name="Zaitshik J."/>
            <person name="Barnes G."/>
            <person name="Brettin T.S."/>
            <person name="Dyer D.W."/>
            <person name="Inzana T.J."/>
        </authorList>
    </citation>
    <scope>NUCLEOTIDE SEQUENCE [LARGE SCALE GENOMIC DNA]</scope>
    <source>
        <strain>2336</strain>
    </source>
</reference>